<gene>
    <name type="primary">nop58</name>
    <name type="ORF">AFUA_3G13400</name>
</gene>
<accession>Q4WYK9</accession>
<keyword id="KW-0539">Nucleus</keyword>
<keyword id="KW-1185">Reference proteome</keyword>
<keyword id="KW-0687">Ribonucleoprotein</keyword>
<keyword id="KW-0690">Ribosome biogenesis</keyword>
<keyword id="KW-0698">rRNA processing</keyword>
<comment type="function">
    <text evidence="1">Required for pre-18S rRNA processing. May bind microtubules (By similarity).</text>
</comment>
<comment type="subcellular location">
    <subcellularLocation>
        <location evidence="1">Nucleus</location>
        <location evidence="1">Nucleolus</location>
    </subcellularLocation>
</comment>
<comment type="similarity">
    <text evidence="4">Belongs to the NOP5/NOP56 family.</text>
</comment>
<dbReference type="EMBL" id="AAHF01000002">
    <property type="protein sequence ID" value="EAL92244.1"/>
    <property type="molecule type" value="Genomic_DNA"/>
</dbReference>
<dbReference type="RefSeq" id="XP_754282.1">
    <property type="nucleotide sequence ID" value="XM_749189.1"/>
</dbReference>
<dbReference type="SMR" id="Q4WYK9"/>
<dbReference type="FunCoup" id="Q4WYK9">
    <property type="interactions" value="1567"/>
</dbReference>
<dbReference type="STRING" id="330879.Q4WYK9"/>
<dbReference type="EnsemblFungi" id="EAL92244">
    <property type="protein sequence ID" value="EAL92244"/>
    <property type="gene ID" value="AFUA_3G13400"/>
</dbReference>
<dbReference type="GeneID" id="3511882"/>
<dbReference type="KEGG" id="afm:AFUA_3G13400"/>
<dbReference type="VEuPathDB" id="FungiDB:Afu3g13400"/>
<dbReference type="eggNOG" id="KOG2572">
    <property type="taxonomic scope" value="Eukaryota"/>
</dbReference>
<dbReference type="HOGENOM" id="CLU_015495_5_0_1"/>
<dbReference type="InParanoid" id="Q4WYK9"/>
<dbReference type="OMA" id="MGMRSNW"/>
<dbReference type="OrthoDB" id="6780543at2759"/>
<dbReference type="Proteomes" id="UP000002530">
    <property type="component" value="Chromosome 3"/>
</dbReference>
<dbReference type="GO" id="GO:0031428">
    <property type="term" value="C:box C/D methylation guide snoRNP complex"/>
    <property type="evidence" value="ECO:0000318"/>
    <property type="project" value="GO_Central"/>
</dbReference>
<dbReference type="GO" id="GO:0005730">
    <property type="term" value="C:nucleolus"/>
    <property type="evidence" value="ECO:0007669"/>
    <property type="project" value="UniProtKB-SubCell"/>
</dbReference>
<dbReference type="GO" id="GO:0032040">
    <property type="term" value="C:small-subunit processome"/>
    <property type="evidence" value="ECO:0000318"/>
    <property type="project" value="GO_Central"/>
</dbReference>
<dbReference type="GO" id="GO:0030515">
    <property type="term" value="F:snoRNA binding"/>
    <property type="evidence" value="ECO:0000318"/>
    <property type="project" value="GO_Central"/>
</dbReference>
<dbReference type="GO" id="GO:0017069">
    <property type="term" value="F:snRNA binding"/>
    <property type="evidence" value="ECO:0007669"/>
    <property type="project" value="EnsemblFungi"/>
</dbReference>
<dbReference type="GO" id="GO:0000494">
    <property type="term" value="P:box C/D sno(s)RNA 3'-end processing"/>
    <property type="evidence" value="ECO:0007669"/>
    <property type="project" value="EnsemblFungi"/>
</dbReference>
<dbReference type="GO" id="GO:0000480">
    <property type="term" value="P:endonucleolytic cleavage in 5'-ETS of tricistronic rRNA transcript (SSU-rRNA, 5.8S rRNA, LSU-rRNA)"/>
    <property type="evidence" value="ECO:0007669"/>
    <property type="project" value="EnsemblFungi"/>
</dbReference>
<dbReference type="GO" id="GO:0000447">
    <property type="term" value="P:endonucleolytic cleavage in ITS1 to separate SSU-rRNA from 5.8S rRNA and LSU-rRNA from tricistronic rRNA transcript (SSU-rRNA, 5.8S rRNA, LSU-rRNA)"/>
    <property type="evidence" value="ECO:0007669"/>
    <property type="project" value="EnsemblFungi"/>
</dbReference>
<dbReference type="GO" id="GO:0000472">
    <property type="term" value="P:endonucleolytic cleavage to generate mature 5'-end of SSU-rRNA from (SSU-rRNA, 5.8S rRNA, LSU-rRNA)"/>
    <property type="evidence" value="ECO:0007669"/>
    <property type="project" value="EnsemblFungi"/>
</dbReference>
<dbReference type="GO" id="GO:1902570">
    <property type="term" value="P:protein localization to nucleolus"/>
    <property type="evidence" value="ECO:0007669"/>
    <property type="project" value="EnsemblFungi"/>
</dbReference>
<dbReference type="GO" id="GO:0000452">
    <property type="term" value="P:snoRNA guided rRNA 2'-O-methylation"/>
    <property type="evidence" value="ECO:0007669"/>
    <property type="project" value="EnsemblFungi"/>
</dbReference>
<dbReference type="FunFam" id="1.10.246.90:FF:000003">
    <property type="entry name" value="Nucleolar protein 58"/>
    <property type="match status" value="1"/>
</dbReference>
<dbReference type="FunFam" id="1.10.287.4070:FF:000001">
    <property type="entry name" value="Probable Nucleolar protein 58"/>
    <property type="match status" value="1"/>
</dbReference>
<dbReference type="Gene3D" id="1.10.287.4070">
    <property type="match status" value="1"/>
</dbReference>
<dbReference type="Gene3D" id="1.10.246.90">
    <property type="entry name" value="Nop domain"/>
    <property type="match status" value="1"/>
</dbReference>
<dbReference type="InterPro" id="IPR045056">
    <property type="entry name" value="Nop56/Nop58"/>
</dbReference>
<dbReference type="InterPro" id="IPR012974">
    <property type="entry name" value="NOP58/56_N"/>
</dbReference>
<dbReference type="InterPro" id="IPR042239">
    <property type="entry name" value="Nop_C"/>
</dbReference>
<dbReference type="InterPro" id="IPR002687">
    <property type="entry name" value="Nop_dom"/>
</dbReference>
<dbReference type="InterPro" id="IPR036070">
    <property type="entry name" value="Nop_dom_sf"/>
</dbReference>
<dbReference type="InterPro" id="IPR012976">
    <property type="entry name" value="NOSIC"/>
</dbReference>
<dbReference type="PANTHER" id="PTHR10894">
    <property type="entry name" value="NUCLEOLAR PROTEIN 5 NUCLEOLAR PROTEIN NOP5 NOP58"/>
    <property type="match status" value="1"/>
</dbReference>
<dbReference type="PANTHER" id="PTHR10894:SF1">
    <property type="entry name" value="NUCLEOLAR PROTEIN 58"/>
    <property type="match status" value="1"/>
</dbReference>
<dbReference type="Pfam" id="PF01798">
    <property type="entry name" value="Nop"/>
    <property type="match status" value="1"/>
</dbReference>
<dbReference type="Pfam" id="PF08156">
    <property type="entry name" value="NOP5NT"/>
    <property type="match status" value="1"/>
</dbReference>
<dbReference type="SMART" id="SM00931">
    <property type="entry name" value="NOSIC"/>
    <property type="match status" value="1"/>
</dbReference>
<dbReference type="SUPFAM" id="SSF89124">
    <property type="entry name" value="Nop domain"/>
    <property type="match status" value="1"/>
</dbReference>
<dbReference type="PROSITE" id="PS51358">
    <property type="entry name" value="NOP"/>
    <property type="match status" value="1"/>
</dbReference>
<reference key="1">
    <citation type="journal article" date="2005" name="Nature">
        <title>Genomic sequence of the pathogenic and allergenic filamentous fungus Aspergillus fumigatus.</title>
        <authorList>
            <person name="Nierman W.C."/>
            <person name="Pain A."/>
            <person name="Anderson M.J."/>
            <person name="Wortman J.R."/>
            <person name="Kim H.S."/>
            <person name="Arroyo J."/>
            <person name="Berriman M."/>
            <person name="Abe K."/>
            <person name="Archer D.B."/>
            <person name="Bermejo C."/>
            <person name="Bennett J.W."/>
            <person name="Bowyer P."/>
            <person name="Chen D."/>
            <person name="Collins M."/>
            <person name="Coulsen R."/>
            <person name="Davies R."/>
            <person name="Dyer P.S."/>
            <person name="Farman M.L."/>
            <person name="Fedorova N."/>
            <person name="Fedorova N.D."/>
            <person name="Feldblyum T.V."/>
            <person name="Fischer R."/>
            <person name="Fosker N."/>
            <person name="Fraser A."/>
            <person name="Garcia J.L."/>
            <person name="Garcia M.J."/>
            <person name="Goble A."/>
            <person name="Goldman G.H."/>
            <person name="Gomi K."/>
            <person name="Griffith-Jones S."/>
            <person name="Gwilliam R."/>
            <person name="Haas B.J."/>
            <person name="Haas H."/>
            <person name="Harris D.E."/>
            <person name="Horiuchi H."/>
            <person name="Huang J."/>
            <person name="Humphray S."/>
            <person name="Jimenez J."/>
            <person name="Keller N."/>
            <person name="Khouri H."/>
            <person name="Kitamoto K."/>
            <person name="Kobayashi T."/>
            <person name="Konzack S."/>
            <person name="Kulkarni R."/>
            <person name="Kumagai T."/>
            <person name="Lafton A."/>
            <person name="Latge J.-P."/>
            <person name="Li W."/>
            <person name="Lord A."/>
            <person name="Lu C."/>
            <person name="Majoros W.H."/>
            <person name="May G.S."/>
            <person name="Miller B.L."/>
            <person name="Mohamoud Y."/>
            <person name="Molina M."/>
            <person name="Monod M."/>
            <person name="Mouyna I."/>
            <person name="Mulligan S."/>
            <person name="Murphy L.D."/>
            <person name="O'Neil S."/>
            <person name="Paulsen I."/>
            <person name="Penalva M.A."/>
            <person name="Pertea M."/>
            <person name="Price C."/>
            <person name="Pritchard B.L."/>
            <person name="Quail M.A."/>
            <person name="Rabbinowitsch E."/>
            <person name="Rawlins N."/>
            <person name="Rajandream M.A."/>
            <person name="Reichard U."/>
            <person name="Renauld H."/>
            <person name="Robson G.D."/>
            <person name="Rodriguez de Cordoba S."/>
            <person name="Rodriguez-Pena J.M."/>
            <person name="Ronning C.M."/>
            <person name="Rutter S."/>
            <person name="Salzberg S.L."/>
            <person name="Sanchez M."/>
            <person name="Sanchez-Ferrero J.C."/>
            <person name="Saunders D."/>
            <person name="Seeger K."/>
            <person name="Squares R."/>
            <person name="Squares S."/>
            <person name="Takeuchi M."/>
            <person name="Tekaia F."/>
            <person name="Turner G."/>
            <person name="Vazquez de Aldana C.R."/>
            <person name="Weidman J."/>
            <person name="White O."/>
            <person name="Woodward J.R."/>
            <person name="Yu J.-H."/>
            <person name="Fraser C.M."/>
            <person name="Galagan J.E."/>
            <person name="Asai K."/>
            <person name="Machida M."/>
            <person name="Hall N."/>
            <person name="Barrell B.G."/>
            <person name="Denning D.W."/>
        </authorList>
    </citation>
    <scope>NUCLEOTIDE SEQUENCE [LARGE SCALE GENOMIC DNA]</scope>
    <source>
        <strain>ATCC MYA-4609 / CBS 101355 / FGSC A1100 / Af293</strain>
    </source>
</reference>
<feature type="chain" id="PRO_0000350974" description="Nucleolar protein 58">
    <location>
        <begin position="1"/>
        <end position="591"/>
    </location>
</feature>
<feature type="domain" description="Nop" evidence="2">
    <location>
        <begin position="285"/>
        <end position="410"/>
    </location>
</feature>
<feature type="region of interest" description="Disordered" evidence="3">
    <location>
        <begin position="437"/>
        <end position="591"/>
    </location>
</feature>
<feature type="compositionally biased region" description="Basic and acidic residues" evidence="3">
    <location>
        <begin position="453"/>
        <end position="462"/>
    </location>
</feature>
<feature type="compositionally biased region" description="Acidic residues" evidence="3">
    <location>
        <begin position="463"/>
        <end position="475"/>
    </location>
</feature>
<feature type="compositionally biased region" description="Basic and acidic residues" evidence="3">
    <location>
        <begin position="476"/>
        <end position="486"/>
    </location>
</feature>
<feature type="compositionally biased region" description="Basic and acidic residues" evidence="3">
    <location>
        <begin position="505"/>
        <end position="515"/>
    </location>
</feature>
<feature type="compositionally biased region" description="Basic and acidic residues" evidence="3">
    <location>
        <begin position="557"/>
        <end position="571"/>
    </location>
</feature>
<feature type="compositionally biased region" description="Basic residues" evidence="3">
    <location>
        <begin position="581"/>
        <end position="591"/>
    </location>
</feature>
<sequence>MTLFILTETSAGYALLKAKDKKLLKRDDLATEASTAEGVSNLVKLKSFQKFDSAATALEEVASLVEGKVTPRLASLLDEIKDEKKVSLAVADPKLGNAIGKLPGMSIQLVADSTTTDIFRAIREHLPTLIPGLLPQDMSTMSLGLSHSLARHKLKFSPDKIDTMIVQAIGLLDDLDKELNTYAMRVKEWYGWHFPELAKILNDNIAYAKLVLKMGMRSNWETADLTEILPEELEATVKAAADRSMGTEISQEDLENIQALAEQVVGFAEYRQQLAGYLTARMNAIAPNLTALVGELVGARLIAHAGSLTNLSKSPASTIQILGAEKALFRALKTKHDTPKYGLIYHASLIGQATGKNKGKMARVLAAKASLGLRVDALAEWDDDATEEDKAALGTEARYNLERKLAAMEGKPLKPRGVAIGPNGASVQPRKFEINETRSYNADADALTGDQPASKKDKKLIEEVSDEEMADADSNEEPKANGTKDDDSSDESEEESSKKHKSKKGKDAELEKMAEKAGLSVKRYKRKLERGEITFDADGNPSAISKKELKKAKKEAKKASKGDEKKRKRSDDGEEADNGEKKKKKKKKGEE</sequence>
<evidence type="ECO:0000250" key="1"/>
<evidence type="ECO:0000255" key="2">
    <source>
        <dbReference type="PROSITE-ProRule" id="PRU00690"/>
    </source>
</evidence>
<evidence type="ECO:0000256" key="3">
    <source>
        <dbReference type="SAM" id="MobiDB-lite"/>
    </source>
</evidence>
<evidence type="ECO:0000305" key="4"/>
<organism>
    <name type="scientific">Aspergillus fumigatus (strain ATCC MYA-4609 / CBS 101355 / FGSC A1100 / Af293)</name>
    <name type="common">Neosartorya fumigata</name>
    <dbReference type="NCBI Taxonomy" id="330879"/>
    <lineage>
        <taxon>Eukaryota</taxon>
        <taxon>Fungi</taxon>
        <taxon>Dikarya</taxon>
        <taxon>Ascomycota</taxon>
        <taxon>Pezizomycotina</taxon>
        <taxon>Eurotiomycetes</taxon>
        <taxon>Eurotiomycetidae</taxon>
        <taxon>Eurotiales</taxon>
        <taxon>Aspergillaceae</taxon>
        <taxon>Aspergillus</taxon>
        <taxon>Aspergillus subgen. Fumigati</taxon>
    </lineage>
</organism>
<proteinExistence type="inferred from homology"/>
<name>NOP58_ASPFU</name>
<protein>
    <recommendedName>
        <fullName>Nucleolar protein 58</fullName>
    </recommendedName>
</protein>